<proteinExistence type="inferred from homology"/>
<sequence>MAKGIREKIKLVSSAGTGHFYTTTKNKRTKPEKLELKKFDPVVRQHVIYKEAKIK</sequence>
<reference key="1">
    <citation type="journal article" date="2002" name="Nucleic Acids Res.">
        <title>Genome sequence of Shigella flexneri 2a: insights into pathogenicity through comparison with genomes of Escherichia coli K12 and O157.</title>
        <authorList>
            <person name="Jin Q."/>
            <person name="Yuan Z."/>
            <person name="Xu J."/>
            <person name="Wang Y."/>
            <person name="Shen Y."/>
            <person name="Lu W."/>
            <person name="Wang J."/>
            <person name="Liu H."/>
            <person name="Yang J."/>
            <person name="Yang F."/>
            <person name="Zhang X."/>
            <person name="Zhang J."/>
            <person name="Yang G."/>
            <person name="Wu H."/>
            <person name="Qu D."/>
            <person name="Dong J."/>
            <person name="Sun L."/>
            <person name="Xue Y."/>
            <person name="Zhao A."/>
            <person name="Gao Y."/>
            <person name="Zhu J."/>
            <person name="Kan B."/>
            <person name="Ding K."/>
            <person name="Chen S."/>
            <person name="Cheng H."/>
            <person name="Yao Z."/>
            <person name="He B."/>
            <person name="Chen R."/>
            <person name="Ma D."/>
            <person name="Qiang B."/>
            <person name="Wen Y."/>
            <person name="Hou Y."/>
            <person name="Yu J."/>
        </authorList>
    </citation>
    <scope>NUCLEOTIDE SEQUENCE [LARGE SCALE GENOMIC DNA]</scope>
    <source>
        <strain>301 / Serotype 2a</strain>
    </source>
</reference>
<reference key="2">
    <citation type="journal article" date="2003" name="Infect. Immun.">
        <title>Complete genome sequence and comparative genomics of Shigella flexneri serotype 2a strain 2457T.</title>
        <authorList>
            <person name="Wei J."/>
            <person name="Goldberg M.B."/>
            <person name="Burland V."/>
            <person name="Venkatesan M.M."/>
            <person name="Deng W."/>
            <person name="Fournier G."/>
            <person name="Mayhew G.F."/>
            <person name="Plunkett G. III"/>
            <person name="Rose D.J."/>
            <person name="Darling A."/>
            <person name="Mau B."/>
            <person name="Perna N.T."/>
            <person name="Payne S.M."/>
            <person name="Runyen-Janecky L.J."/>
            <person name="Zhou S."/>
            <person name="Schwartz D.C."/>
            <person name="Blattner F.R."/>
        </authorList>
    </citation>
    <scope>NUCLEOTIDE SEQUENCE [LARGE SCALE GENOMIC DNA]</scope>
    <source>
        <strain>ATCC 700930 / 2457T / Serotype 2a</strain>
    </source>
</reference>
<comment type="subunit">
    <text evidence="1">Part of the 50S ribosomal subunit. Cross-links to the P and E site tRNAs (By similarity).</text>
</comment>
<comment type="miscellaneous">
    <text evidence="1">Surface exposed on the 50S subunit.</text>
</comment>
<comment type="similarity">
    <text evidence="2">Belongs to the bacterial ribosomal protein bL33 family.</text>
</comment>
<evidence type="ECO:0000250" key="1"/>
<evidence type="ECO:0000305" key="2"/>
<dbReference type="EMBL" id="AE005674">
    <property type="protein sequence ID" value="AAN45122.1"/>
    <property type="molecule type" value="Genomic_DNA"/>
</dbReference>
<dbReference type="EMBL" id="AE014073">
    <property type="protein sequence ID" value="AAP19070.1"/>
    <property type="molecule type" value="Genomic_DNA"/>
</dbReference>
<dbReference type="RefSeq" id="NP_709415.1">
    <property type="nucleotide sequence ID" value="NC_004337.2"/>
</dbReference>
<dbReference type="RefSeq" id="WP_001051798.1">
    <property type="nucleotide sequence ID" value="NZ_WPGW01000042.1"/>
</dbReference>
<dbReference type="SMR" id="P0A7P4"/>
<dbReference type="STRING" id="198214.SF3675"/>
<dbReference type="PaxDb" id="198214-SF3675"/>
<dbReference type="GeneID" id="1026176"/>
<dbReference type="GeneID" id="97607673"/>
<dbReference type="KEGG" id="sfl:SF3675"/>
<dbReference type="KEGG" id="sfx:S4093"/>
<dbReference type="PATRIC" id="fig|198214.7.peg.4338"/>
<dbReference type="HOGENOM" id="CLU_190949_1_1_6"/>
<dbReference type="Proteomes" id="UP000001006">
    <property type="component" value="Chromosome"/>
</dbReference>
<dbReference type="Proteomes" id="UP000002673">
    <property type="component" value="Chromosome"/>
</dbReference>
<dbReference type="GO" id="GO:0022625">
    <property type="term" value="C:cytosolic large ribosomal subunit"/>
    <property type="evidence" value="ECO:0007669"/>
    <property type="project" value="TreeGrafter"/>
</dbReference>
<dbReference type="GO" id="GO:0003735">
    <property type="term" value="F:structural constituent of ribosome"/>
    <property type="evidence" value="ECO:0007669"/>
    <property type="project" value="InterPro"/>
</dbReference>
<dbReference type="GO" id="GO:0000049">
    <property type="term" value="F:tRNA binding"/>
    <property type="evidence" value="ECO:0007669"/>
    <property type="project" value="UniProtKB-KW"/>
</dbReference>
<dbReference type="GO" id="GO:0006412">
    <property type="term" value="P:translation"/>
    <property type="evidence" value="ECO:0007669"/>
    <property type="project" value="UniProtKB-UniRule"/>
</dbReference>
<dbReference type="FunFam" id="2.20.28.120:FF:000001">
    <property type="entry name" value="50S ribosomal protein L33"/>
    <property type="match status" value="1"/>
</dbReference>
<dbReference type="Gene3D" id="2.20.28.120">
    <property type="entry name" value="Ribosomal protein L33"/>
    <property type="match status" value="1"/>
</dbReference>
<dbReference type="HAMAP" id="MF_00294">
    <property type="entry name" value="Ribosomal_bL33"/>
    <property type="match status" value="1"/>
</dbReference>
<dbReference type="InterPro" id="IPR001705">
    <property type="entry name" value="Ribosomal_bL33"/>
</dbReference>
<dbReference type="InterPro" id="IPR018264">
    <property type="entry name" value="Ribosomal_bL33_CS"/>
</dbReference>
<dbReference type="InterPro" id="IPR038584">
    <property type="entry name" value="Ribosomal_bL33_sf"/>
</dbReference>
<dbReference type="InterPro" id="IPR011332">
    <property type="entry name" value="Ribosomal_zn-bd"/>
</dbReference>
<dbReference type="NCBIfam" id="NF001860">
    <property type="entry name" value="PRK00595.1"/>
    <property type="match status" value="1"/>
</dbReference>
<dbReference type="NCBIfam" id="TIGR01023">
    <property type="entry name" value="rpmG_bact"/>
    <property type="match status" value="1"/>
</dbReference>
<dbReference type="PANTHER" id="PTHR15238">
    <property type="entry name" value="54S RIBOSOMAL PROTEIN L39, MITOCHONDRIAL"/>
    <property type="match status" value="1"/>
</dbReference>
<dbReference type="PANTHER" id="PTHR15238:SF1">
    <property type="entry name" value="LARGE RIBOSOMAL SUBUNIT PROTEIN BL33M"/>
    <property type="match status" value="1"/>
</dbReference>
<dbReference type="Pfam" id="PF00471">
    <property type="entry name" value="Ribosomal_L33"/>
    <property type="match status" value="1"/>
</dbReference>
<dbReference type="SUPFAM" id="SSF57829">
    <property type="entry name" value="Zn-binding ribosomal proteins"/>
    <property type="match status" value="1"/>
</dbReference>
<dbReference type="PROSITE" id="PS00582">
    <property type="entry name" value="RIBOSOMAL_L33"/>
    <property type="match status" value="1"/>
</dbReference>
<organism>
    <name type="scientific">Shigella flexneri</name>
    <dbReference type="NCBI Taxonomy" id="623"/>
    <lineage>
        <taxon>Bacteria</taxon>
        <taxon>Pseudomonadati</taxon>
        <taxon>Pseudomonadota</taxon>
        <taxon>Gammaproteobacteria</taxon>
        <taxon>Enterobacterales</taxon>
        <taxon>Enterobacteriaceae</taxon>
        <taxon>Shigella</taxon>
    </lineage>
</organism>
<name>RL33_SHIFL</name>
<gene>
    <name type="primary">rpmG</name>
    <name type="ordered locus">SF3675</name>
    <name type="ordered locus">S4093</name>
</gene>
<protein>
    <recommendedName>
        <fullName evidence="2">Large ribosomal subunit protein bL33</fullName>
    </recommendedName>
    <alternativeName>
        <fullName>50S ribosomal protein L33</fullName>
    </alternativeName>
</protein>
<feature type="initiator methionine" description="Removed" evidence="1">
    <location>
        <position position="1"/>
    </location>
</feature>
<feature type="chain" id="PRO_0000170209" description="Large ribosomal subunit protein bL33">
    <location>
        <begin position="2"/>
        <end position="55"/>
    </location>
</feature>
<feature type="modified residue" description="N-methylalanine" evidence="1">
    <location>
        <position position="2"/>
    </location>
</feature>
<accession>P0A7P4</accession>
<accession>P02436</accession>
<keyword id="KW-0488">Methylation</keyword>
<keyword id="KW-1185">Reference proteome</keyword>
<keyword id="KW-0687">Ribonucleoprotein</keyword>
<keyword id="KW-0689">Ribosomal protein</keyword>
<keyword id="KW-0694">RNA-binding</keyword>
<keyword id="KW-0820">tRNA-binding</keyword>